<name>FABR_SHIBS</name>
<protein>
    <recommendedName>
        <fullName evidence="1">HTH-type transcriptional repressor FabR</fullName>
    </recommendedName>
</protein>
<reference key="1">
    <citation type="journal article" date="2005" name="Nucleic Acids Res.">
        <title>Genome dynamics and diversity of Shigella species, the etiologic agents of bacillary dysentery.</title>
        <authorList>
            <person name="Yang F."/>
            <person name="Yang J."/>
            <person name="Zhang X."/>
            <person name="Chen L."/>
            <person name="Jiang Y."/>
            <person name="Yan Y."/>
            <person name="Tang X."/>
            <person name="Wang J."/>
            <person name="Xiong Z."/>
            <person name="Dong J."/>
            <person name="Xue Y."/>
            <person name="Zhu Y."/>
            <person name="Xu X."/>
            <person name="Sun L."/>
            <person name="Chen S."/>
            <person name="Nie H."/>
            <person name="Peng J."/>
            <person name="Xu J."/>
            <person name="Wang Y."/>
            <person name="Yuan Z."/>
            <person name="Wen Y."/>
            <person name="Yao Z."/>
            <person name="Shen Y."/>
            <person name="Qiang B."/>
            <person name="Hou Y."/>
            <person name="Yu J."/>
            <person name="Jin Q."/>
        </authorList>
    </citation>
    <scope>NUCLEOTIDE SEQUENCE [LARGE SCALE GENOMIC DNA]</scope>
    <source>
        <strain>Sb227</strain>
    </source>
</reference>
<keyword id="KW-0963">Cytoplasm</keyword>
<keyword id="KW-0238">DNA-binding</keyword>
<keyword id="KW-0275">Fatty acid biosynthesis</keyword>
<keyword id="KW-0276">Fatty acid metabolism</keyword>
<keyword id="KW-0444">Lipid biosynthesis</keyword>
<keyword id="KW-0443">Lipid metabolism</keyword>
<keyword id="KW-0678">Repressor</keyword>
<keyword id="KW-0804">Transcription</keyword>
<keyword id="KW-0805">Transcription regulation</keyword>
<gene>
    <name evidence="1" type="primary">fabR</name>
    <name type="ordered locus">SBO_3982</name>
</gene>
<proteinExistence type="inferred from homology"/>
<accession>Q31U25</accession>
<comment type="function">
    <text evidence="1">Represses the transcription of fabB, involved in unsaturated fatty acid (UFA) biosynthesis. By controlling UFA production, FabR directly influences the physical properties of the membrane bilayer.</text>
</comment>
<comment type="subunit">
    <text evidence="1">Homodimer.</text>
</comment>
<comment type="subcellular location">
    <subcellularLocation>
        <location evidence="1">Cytoplasm</location>
    </subcellularLocation>
</comment>
<comment type="sequence caution" evidence="2">
    <conflict type="erroneous initiation">
        <sequence resource="EMBL-CDS" id="ABB68433"/>
    </conflict>
</comment>
<evidence type="ECO:0000255" key="1">
    <source>
        <dbReference type="HAMAP-Rule" id="MF_01190"/>
    </source>
</evidence>
<evidence type="ECO:0000305" key="2"/>
<dbReference type="EMBL" id="CP000036">
    <property type="protein sequence ID" value="ABB68433.1"/>
    <property type="status" value="ALT_INIT"/>
    <property type="molecule type" value="Genomic_DNA"/>
</dbReference>
<dbReference type="SMR" id="Q31U25"/>
<dbReference type="KEGG" id="sbo:SBO_3982"/>
<dbReference type="HOGENOM" id="CLU_081861_0_0_6"/>
<dbReference type="Proteomes" id="UP000007067">
    <property type="component" value="Chromosome"/>
</dbReference>
<dbReference type="GO" id="GO:0005737">
    <property type="term" value="C:cytoplasm"/>
    <property type="evidence" value="ECO:0007669"/>
    <property type="project" value="UniProtKB-SubCell"/>
</dbReference>
<dbReference type="GO" id="GO:0003677">
    <property type="term" value="F:DNA binding"/>
    <property type="evidence" value="ECO:0007669"/>
    <property type="project" value="UniProtKB-KW"/>
</dbReference>
<dbReference type="GO" id="GO:0003700">
    <property type="term" value="F:DNA-binding transcription factor activity"/>
    <property type="evidence" value="ECO:0007669"/>
    <property type="project" value="UniProtKB-UniRule"/>
</dbReference>
<dbReference type="GO" id="GO:0006633">
    <property type="term" value="P:fatty acid biosynthetic process"/>
    <property type="evidence" value="ECO:0007669"/>
    <property type="project" value="UniProtKB-UniRule"/>
</dbReference>
<dbReference type="GO" id="GO:0045717">
    <property type="term" value="P:negative regulation of fatty acid biosynthetic process"/>
    <property type="evidence" value="ECO:0007669"/>
    <property type="project" value="UniProtKB-UniRule"/>
</dbReference>
<dbReference type="FunFam" id="1.10.10.60:FF:000034">
    <property type="entry name" value="HTH-type transcriptional repressor FabR"/>
    <property type="match status" value="1"/>
</dbReference>
<dbReference type="FunFam" id="1.10.357.10:FF:000001">
    <property type="entry name" value="HTH-type transcriptional repressor FabR"/>
    <property type="match status" value="1"/>
</dbReference>
<dbReference type="Gene3D" id="1.10.10.60">
    <property type="entry name" value="Homeodomain-like"/>
    <property type="match status" value="1"/>
</dbReference>
<dbReference type="Gene3D" id="1.10.357.10">
    <property type="entry name" value="Tetracycline Repressor, domain 2"/>
    <property type="match status" value="1"/>
</dbReference>
<dbReference type="HAMAP" id="MF_01190">
    <property type="entry name" value="HTH_type_FabR"/>
    <property type="match status" value="1"/>
</dbReference>
<dbReference type="InterPro" id="IPR054129">
    <property type="entry name" value="DesT_TetR_C"/>
</dbReference>
<dbReference type="InterPro" id="IPR009057">
    <property type="entry name" value="Homeodomain-like_sf"/>
</dbReference>
<dbReference type="InterPro" id="IPR001647">
    <property type="entry name" value="HTH_TetR"/>
</dbReference>
<dbReference type="InterPro" id="IPR050692">
    <property type="entry name" value="HTH_transcr_repressor_FabR"/>
</dbReference>
<dbReference type="InterPro" id="IPR023764">
    <property type="entry name" value="Tscrpt_reg_HTH_FabR"/>
</dbReference>
<dbReference type="NCBIfam" id="NF008402">
    <property type="entry name" value="PRK11202.1"/>
    <property type="match status" value="1"/>
</dbReference>
<dbReference type="PANTHER" id="PTHR47752">
    <property type="entry name" value="HTH-TYPE TRANSCRIPTIONAL REPRESSOR FABR"/>
    <property type="match status" value="1"/>
</dbReference>
<dbReference type="PANTHER" id="PTHR47752:SF1">
    <property type="entry name" value="HTH-TYPE TRANSCRIPTIONAL REPRESSOR FABR"/>
    <property type="match status" value="1"/>
</dbReference>
<dbReference type="Pfam" id="PF21943">
    <property type="entry name" value="TetR_C_46"/>
    <property type="match status" value="1"/>
</dbReference>
<dbReference type="Pfam" id="PF00440">
    <property type="entry name" value="TetR_N"/>
    <property type="match status" value="1"/>
</dbReference>
<dbReference type="SUPFAM" id="SSF46689">
    <property type="entry name" value="Homeodomain-like"/>
    <property type="match status" value="1"/>
</dbReference>
<dbReference type="PROSITE" id="PS50977">
    <property type="entry name" value="HTH_TETR_2"/>
    <property type="match status" value="1"/>
</dbReference>
<feature type="chain" id="PRO_0000293574" description="HTH-type transcriptional repressor FabR">
    <location>
        <begin position="1"/>
        <end position="215"/>
    </location>
</feature>
<feature type="domain" description="HTH tetR-type" evidence="1">
    <location>
        <begin position="10"/>
        <end position="70"/>
    </location>
</feature>
<feature type="DNA-binding region" description="H-T-H motif" evidence="1">
    <location>
        <begin position="33"/>
        <end position="52"/>
    </location>
</feature>
<sequence length="215" mass="24418">MGIRAQQKEKTRRSLVEAAFSQLSAERSFASLSLREVAREAGIAPTSFYRHFRDVDELGLTMVDESGLMLRQLMRQARQRIAKGGSVIRTSVSTFMEFIGNNPNAFRLLLRERSGTSAAFRAAVAREIQHFIAELADYLELENHMPRAFTEAQAEAMVTIVFSAGAEALDVGVEQRRQLEERLVLQLRMISKGAYYWYRREQEKTAIIPGNVKDE</sequence>
<organism>
    <name type="scientific">Shigella boydii serotype 4 (strain Sb227)</name>
    <dbReference type="NCBI Taxonomy" id="300268"/>
    <lineage>
        <taxon>Bacteria</taxon>
        <taxon>Pseudomonadati</taxon>
        <taxon>Pseudomonadota</taxon>
        <taxon>Gammaproteobacteria</taxon>
        <taxon>Enterobacterales</taxon>
        <taxon>Enterobacteriaceae</taxon>
        <taxon>Shigella</taxon>
    </lineage>
</organism>